<protein>
    <recommendedName>
        <fullName evidence="1">Large ribosomal subunit protein bL19</fullName>
    </recommendedName>
    <alternativeName>
        <fullName evidence="2">50S ribosomal protein L19</fullName>
    </alternativeName>
</protein>
<feature type="chain" id="PRO_0000226836" description="Large ribosomal subunit protein bL19">
    <location>
        <begin position="1"/>
        <end position="113"/>
    </location>
</feature>
<dbReference type="EMBL" id="CP000141">
    <property type="protein sequence ID" value="ABB14271.1"/>
    <property type="molecule type" value="Genomic_DNA"/>
</dbReference>
<dbReference type="RefSeq" id="WP_011344335.1">
    <property type="nucleotide sequence ID" value="NC_007503.1"/>
</dbReference>
<dbReference type="SMR" id="Q3AC74"/>
<dbReference type="FunCoup" id="Q3AC74">
    <property type="interactions" value="428"/>
</dbReference>
<dbReference type="STRING" id="246194.CHY_1428"/>
<dbReference type="KEGG" id="chy:CHY_1428"/>
<dbReference type="eggNOG" id="COG0335">
    <property type="taxonomic scope" value="Bacteria"/>
</dbReference>
<dbReference type="HOGENOM" id="CLU_103507_2_0_9"/>
<dbReference type="InParanoid" id="Q3AC74"/>
<dbReference type="OrthoDB" id="9803541at2"/>
<dbReference type="Proteomes" id="UP000002706">
    <property type="component" value="Chromosome"/>
</dbReference>
<dbReference type="GO" id="GO:0022625">
    <property type="term" value="C:cytosolic large ribosomal subunit"/>
    <property type="evidence" value="ECO:0007669"/>
    <property type="project" value="TreeGrafter"/>
</dbReference>
<dbReference type="GO" id="GO:0003735">
    <property type="term" value="F:structural constituent of ribosome"/>
    <property type="evidence" value="ECO:0007669"/>
    <property type="project" value="InterPro"/>
</dbReference>
<dbReference type="GO" id="GO:0006412">
    <property type="term" value="P:translation"/>
    <property type="evidence" value="ECO:0007669"/>
    <property type="project" value="UniProtKB-UniRule"/>
</dbReference>
<dbReference type="FunFam" id="2.30.30.790:FF:000001">
    <property type="entry name" value="50S ribosomal protein L19"/>
    <property type="match status" value="1"/>
</dbReference>
<dbReference type="Gene3D" id="2.30.30.790">
    <property type="match status" value="1"/>
</dbReference>
<dbReference type="HAMAP" id="MF_00402">
    <property type="entry name" value="Ribosomal_bL19"/>
    <property type="match status" value="1"/>
</dbReference>
<dbReference type="InterPro" id="IPR001857">
    <property type="entry name" value="Ribosomal_bL19"/>
</dbReference>
<dbReference type="InterPro" id="IPR018257">
    <property type="entry name" value="Ribosomal_bL19_CS"/>
</dbReference>
<dbReference type="InterPro" id="IPR038657">
    <property type="entry name" value="Ribosomal_bL19_sf"/>
</dbReference>
<dbReference type="InterPro" id="IPR008991">
    <property type="entry name" value="Translation_prot_SH3-like_sf"/>
</dbReference>
<dbReference type="NCBIfam" id="TIGR01024">
    <property type="entry name" value="rplS_bact"/>
    <property type="match status" value="1"/>
</dbReference>
<dbReference type="PANTHER" id="PTHR15680:SF9">
    <property type="entry name" value="LARGE RIBOSOMAL SUBUNIT PROTEIN BL19M"/>
    <property type="match status" value="1"/>
</dbReference>
<dbReference type="PANTHER" id="PTHR15680">
    <property type="entry name" value="RIBOSOMAL PROTEIN L19"/>
    <property type="match status" value="1"/>
</dbReference>
<dbReference type="Pfam" id="PF01245">
    <property type="entry name" value="Ribosomal_L19"/>
    <property type="match status" value="1"/>
</dbReference>
<dbReference type="PIRSF" id="PIRSF002191">
    <property type="entry name" value="Ribosomal_L19"/>
    <property type="match status" value="1"/>
</dbReference>
<dbReference type="PRINTS" id="PR00061">
    <property type="entry name" value="RIBOSOMALL19"/>
</dbReference>
<dbReference type="SUPFAM" id="SSF50104">
    <property type="entry name" value="Translation proteins SH3-like domain"/>
    <property type="match status" value="1"/>
</dbReference>
<dbReference type="PROSITE" id="PS01015">
    <property type="entry name" value="RIBOSOMAL_L19"/>
    <property type="match status" value="1"/>
</dbReference>
<accession>Q3AC74</accession>
<reference key="1">
    <citation type="journal article" date="2005" name="PLoS Genet.">
        <title>Life in hot carbon monoxide: the complete genome sequence of Carboxydothermus hydrogenoformans Z-2901.</title>
        <authorList>
            <person name="Wu M."/>
            <person name="Ren Q."/>
            <person name="Durkin A.S."/>
            <person name="Daugherty S.C."/>
            <person name="Brinkac L.M."/>
            <person name="Dodson R.J."/>
            <person name="Madupu R."/>
            <person name="Sullivan S.A."/>
            <person name="Kolonay J.F."/>
            <person name="Nelson W.C."/>
            <person name="Tallon L.J."/>
            <person name="Jones K.M."/>
            <person name="Ulrich L.E."/>
            <person name="Gonzalez J.M."/>
            <person name="Zhulin I.B."/>
            <person name="Robb F.T."/>
            <person name="Eisen J.A."/>
        </authorList>
    </citation>
    <scope>NUCLEOTIDE SEQUENCE [LARGE SCALE GENOMIC DNA]</scope>
    <source>
        <strain>ATCC BAA-161 / DSM 6008 / Z-2901</strain>
    </source>
</reference>
<sequence length="113" mass="13272">MDLLKSLEEEQLRKDLPEFRPGDTVKVYFKVIEGNRERIQPYEGVVIRKRGSGLSATFTVRRVSYGIGVERTFPLHSPRIEKIEVIRRGKVRRARLYYLRKLTGKAARIAERR</sequence>
<evidence type="ECO:0000255" key="1">
    <source>
        <dbReference type="HAMAP-Rule" id="MF_00402"/>
    </source>
</evidence>
<evidence type="ECO:0000305" key="2"/>
<name>RL19_CARHZ</name>
<gene>
    <name evidence="1" type="primary">rplS</name>
    <name type="ordered locus">CHY_1428</name>
</gene>
<proteinExistence type="inferred from homology"/>
<organism>
    <name type="scientific">Carboxydothermus hydrogenoformans (strain ATCC BAA-161 / DSM 6008 / Z-2901)</name>
    <dbReference type="NCBI Taxonomy" id="246194"/>
    <lineage>
        <taxon>Bacteria</taxon>
        <taxon>Bacillati</taxon>
        <taxon>Bacillota</taxon>
        <taxon>Clostridia</taxon>
        <taxon>Thermoanaerobacterales</taxon>
        <taxon>Thermoanaerobacteraceae</taxon>
        <taxon>Carboxydothermus</taxon>
    </lineage>
</organism>
<comment type="function">
    <text evidence="1">This protein is located at the 30S-50S ribosomal subunit interface and may play a role in the structure and function of the aminoacyl-tRNA binding site.</text>
</comment>
<comment type="similarity">
    <text evidence="1">Belongs to the bacterial ribosomal protein bL19 family.</text>
</comment>
<keyword id="KW-1185">Reference proteome</keyword>
<keyword id="KW-0687">Ribonucleoprotein</keyword>
<keyword id="KW-0689">Ribosomal protein</keyword>